<organism>
    <name type="scientific">Mus musculus</name>
    <name type="common">Mouse</name>
    <dbReference type="NCBI Taxonomy" id="10090"/>
    <lineage>
        <taxon>Eukaryota</taxon>
        <taxon>Metazoa</taxon>
        <taxon>Chordata</taxon>
        <taxon>Craniata</taxon>
        <taxon>Vertebrata</taxon>
        <taxon>Euteleostomi</taxon>
        <taxon>Mammalia</taxon>
        <taxon>Eutheria</taxon>
        <taxon>Euarchontoglires</taxon>
        <taxon>Glires</taxon>
        <taxon>Rodentia</taxon>
        <taxon>Myomorpha</taxon>
        <taxon>Muroidea</taxon>
        <taxon>Muridae</taxon>
        <taxon>Murinae</taxon>
        <taxon>Mus</taxon>
        <taxon>Mus</taxon>
    </lineage>
</organism>
<evidence type="ECO:0000250" key="1"/>
<evidence type="ECO:0000250" key="2">
    <source>
        <dbReference type="UniProtKB" id="Q8NDV1"/>
    </source>
</evidence>
<evidence type="ECO:0000250" key="3">
    <source>
        <dbReference type="UniProtKB" id="Q9QYJ1"/>
    </source>
</evidence>
<evidence type="ECO:0000255" key="4"/>
<evidence type="ECO:0000269" key="5">
    <source>
    </source>
</evidence>
<evidence type="ECO:0000269" key="6">
    <source>
    </source>
</evidence>
<evidence type="ECO:0000303" key="7">
    <source>
    </source>
</evidence>
<evidence type="ECO:0000303" key="8">
    <source>
    </source>
</evidence>
<evidence type="ECO:0000305" key="9"/>
<evidence type="ECO:0000305" key="10">
    <source>
    </source>
</evidence>
<evidence type="ECO:0000305" key="11">
    <source>
    </source>
</evidence>
<sequence length="305" mass="35414">MACILKRKPVLVVSFIALCILLLAMRLVNDATFPLLLNCFGQPKTKWIPLPYTFRQPLRTHYGYINVRTQEPLQLNCNHCAIVSNSGQMVGQKVGEEIDHASCIWRMNNAPTKGFEEDVGYMTMVRVVSHTSVPLLLKNPDYFFKEASRTIYVIWGPFRNMRKDGNGIVYNMLKKTVDAYPDAQIYVTTEQQMTHCDRVFKDETGKDRVQSGSYLSTGWFTFILAMDACYSIHVYGMINETYCKTEGYRKVPYHYYEQGKDECNEYLLHEHAPYGGHRFITEKKVFAKWAKKHRIVFTHPNWTLS</sequence>
<proteinExistence type="evidence at protein level"/>
<feature type="chain" id="PRO_0000149276" description="Alpha-N-acetylgalactosaminide alpha-2,6-sialyltransferase 3">
    <location>
        <begin position="1"/>
        <end position="305"/>
    </location>
</feature>
<feature type="topological domain" description="Cytoplasmic" evidence="4">
    <location>
        <begin position="1"/>
        <end position="8"/>
    </location>
</feature>
<feature type="transmembrane region" description="Helical; Signal-anchor for type II membrane protein" evidence="4">
    <location>
        <begin position="9"/>
        <end position="28"/>
    </location>
</feature>
<feature type="topological domain" description="Lumenal" evidence="4">
    <location>
        <begin position="29"/>
        <end position="305"/>
    </location>
</feature>
<feature type="glycosylation site" description="N-linked (GlcNAc...) asparagine" evidence="4">
    <location>
        <position position="239"/>
    </location>
</feature>
<feature type="glycosylation site" description="N-linked (GlcNAc...) asparagine" evidence="4">
    <location>
        <position position="301"/>
    </location>
</feature>
<feature type="disulfide bond" evidence="1">
    <location>
        <begin position="80"/>
        <end position="229"/>
    </location>
</feature>
<keyword id="KW-1015">Disulfide bond</keyword>
<keyword id="KW-0325">Glycoprotein</keyword>
<keyword id="KW-0328">Glycosyltransferase</keyword>
<keyword id="KW-0333">Golgi apparatus</keyword>
<keyword id="KW-0443">Lipid metabolism</keyword>
<keyword id="KW-0472">Membrane</keyword>
<keyword id="KW-1185">Reference proteome</keyword>
<keyword id="KW-0730">Sialic acid</keyword>
<keyword id="KW-0735">Signal-anchor</keyword>
<keyword id="KW-0808">Transferase</keyword>
<keyword id="KW-0812">Transmembrane</keyword>
<keyword id="KW-1133">Transmembrane helix</keyword>
<protein>
    <recommendedName>
        <fullName>Alpha-N-acetylgalactosaminide alpha-2,6-sialyltransferase 3</fullName>
        <ecNumber evidence="5">2.4.3.7</ecNumber>
    </recommendedName>
    <alternativeName>
        <fullName>GalNAc alpha-2,6-sialyltransferase III</fullName>
    </alternativeName>
    <alternativeName>
        <fullName evidence="7 8">ST6GalNAc III</fullName>
        <shortName>ST6GalNAcIII</shortName>
    </alternativeName>
    <alternativeName>
        <fullName>STY</fullName>
    </alternativeName>
    <alternativeName>
        <fullName>Sialyltransferase 7C</fullName>
        <shortName>SIAT7-C</shortName>
    </alternativeName>
</protein>
<gene>
    <name type="primary">St6galnac3</name>
    <name type="synonym">Siat7c</name>
</gene>
<accession>Q9WUV2</accession>
<accession>Q9JHP5</accession>
<dbReference type="EC" id="2.4.3.7" evidence="5"/>
<dbReference type="EMBL" id="Y11342">
    <property type="protein sequence ID" value="CAA72181.2"/>
    <property type="molecule type" value="mRNA"/>
</dbReference>
<dbReference type="EMBL" id="Y11343">
    <property type="protein sequence ID" value="CAB95031.1"/>
    <property type="molecule type" value="Genomic_DNA"/>
</dbReference>
<dbReference type="EMBL" id="Y11344">
    <property type="protein sequence ID" value="CAB95031.1"/>
    <property type="status" value="JOINED"/>
    <property type="molecule type" value="Genomic_DNA"/>
</dbReference>
<dbReference type="EMBL" id="Y11345">
    <property type="protein sequence ID" value="CAB95031.1"/>
    <property type="status" value="JOINED"/>
    <property type="molecule type" value="Genomic_DNA"/>
</dbReference>
<dbReference type="EMBL" id="Y11346">
    <property type="protein sequence ID" value="CAB95031.1"/>
    <property type="status" value="JOINED"/>
    <property type="molecule type" value="Genomic_DNA"/>
</dbReference>
<dbReference type="EMBL" id="BC058387">
    <property type="protein sequence ID" value="AAH58387.1"/>
    <property type="molecule type" value="mRNA"/>
</dbReference>
<dbReference type="CCDS" id="CCDS38677.1"/>
<dbReference type="RefSeq" id="NP_035502.1">
    <property type="nucleotide sequence ID" value="NM_011372.3"/>
</dbReference>
<dbReference type="SMR" id="Q9WUV2"/>
<dbReference type="FunCoup" id="Q9WUV2">
    <property type="interactions" value="1010"/>
</dbReference>
<dbReference type="STRING" id="10090.ENSMUSP00000143747"/>
<dbReference type="SwissLipids" id="SLP:000000783"/>
<dbReference type="CAZy" id="GT29">
    <property type="family name" value="Glycosyltransferase Family 29"/>
</dbReference>
<dbReference type="GlyCosmos" id="Q9WUV2">
    <property type="glycosylation" value="2 sites, No reported glycans"/>
</dbReference>
<dbReference type="GlyGen" id="Q9WUV2">
    <property type="glycosylation" value="2 sites, 1 N-linked glycan (1 site)"/>
</dbReference>
<dbReference type="PhosphoSitePlus" id="Q9WUV2"/>
<dbReference type="PaxDb" id="10090-ENSMUSP00000068598"/>
<dbReference type="ProteomicsDB" id="257234"/>
<dbReference type="Antibodypedia" id="33477">
    <property type="antibodies" value="49 antibodies from 14 providers"/>
</dbReference>
<dbReference type="DNASU" id="20447"/>
<dbReference type="Ensembl" id="ENSMUST00000200397.5">
    <property type="protein sequence ID" value="ENSMUSP00000143747.2"/>
    <property type="gene ID" value="ENSMUSG00000052544.10"/>
</dbReference>
<dbReference type="GeneID" id="20447"/>
<dbReference type="KEGG" id="mmu:20447"/>
<dbReference type="UCSC" id="uc008rtw.1">
    <property type="organism name" value="mouse"/>
</dbReference>
<dbReference type="AGR" id="MGI:1341828"/>
<dbReference type="CTD" id="256435"/>
<dbReference type="MGI" id="MGI:1341828">
    <property type="gene designation" value="St6galnac3"/>
</dbReference>
<dbReference type="VEuPathDB" id="HostDB:ENSMUSG00000052544"/>
<dbReference type="eggNOG" id="KOG2692">
    <property type="taxonomic scope" value="Eukaryota"/>
</dbReference>
<dbReference type="GeneTree" id="ENSGT00940000159735"/>
<dbReference type="HOGENOM" id="CLU_061099_2_2_1"/>
<dbReference type="InParanoid" id="Q9WUV2"/>
<dbReference type="OMA" id="PGAKWIP"/>
<dbReference type="OrthoDB" id="10264956at2759"/>
<dbReference type="PhylomeDB" id="Q9WUV2"/>
<dbReference type="TreeFam" id="TF352818"/>
<dbReference type="Reactome" id="R-MMU-4085001">
    <property type="pathway name" value="Sialic acid metabolism"/>
</dbReference>
<dbReference type="Reactome" id="R-MMU-977068">
    <property type="pathway name" value="Termination of O-glycan biosynthesis"/>
</dbReference>
<dbReference type="UniPathway" id="UPA00378"/>
<dbReference type="BioGRID-ORCS" id="20447">
    <property type="hits" value="2 hits in 79 CRISPR screens"/>
</dbReference>
<dbReference type="ChiTaRS" id="St6galnac3">
    <property type="organism name" value="mouse"/>
</dbReference>
<dbReference type="PRO" id="PR:Q9WUV2"/>
<dbReference type="Proteomes" id="UP000000589">
    <property type="component" value="Chromosome 3"/>
</dbReference>
<dbReference type="RNAct" id="Q9WUV2">
    <property type="molecule type" value="protein"/>
</dbReference>
<dbReference type="Bgee" id="ENSMUSG00000052544">
    <property type="expression patterns" value="Expressed in lumbar subsegment of spinal cord and 195 other cell types or tissues"/>
</dbReference>
<dbReference type="ExpressionAtlas" id="Q9WUV2">
    <property type="expression patterns" value="baseline and differential"/>
</dbReference>
<dbReference type="GO" id="GO:0000139">
    <property type="term" value="C:Golgi membrane"/>
    <property type="evidence" value="ECO:0007669"/>
    <property type="project" value="UniProtKB-SubCell"/>
</dbReference>
<dbReference type="GO" id="GO:0005654">
    <property type="term" value="C:nucleoplasm"/>
    <property type="evidence" value="ECO:0007669"/>
    <property type="project" value="Ensembl"/>
</dbReference>
<dbReference type="GO" id="GO:0047290">
    <property type="term" value="F:alpha-N-acetylneuraminyl-2,3-beta-galactosyl-1,3-N-acetyl-galactosaminide 6-alpha-sialyltransferase activity"/>
    <property type="evidence" value="ECO:0007669"/>
    <property type="project" value="RHEA"/>
</dbReference>
<dbReference type="GO" id="GO:0006677">
    <property type="term" value="P:glycosylceramide metabolic process"/>
    <property type="evidence" value="ECO:0007669"/>
    <property type="project" value="Ensembl"/>
</dbReference>
<dbReference type="GO" id="GO:0006486">
    <property type="term" value="P:protein glycosylation"/>
    <property type="evidence" value="ECO:0007669"/>
    <property type="project" value="UniProtKB-UniPathway"/>
</dbReference>
<dbReference type="FunFam" id="3.90.1480.20:FF:000008">
    <property type="entry name" value="ST6 N-acetylgalactosaminide alpha-2,6-sialyltransferase 3"/>
    <property type="match status" value="1"/>
</dbReference>
<dbReference type="Gene3D" id="3.90.1480.20">
    <property type="entry name" value="Glycosyl transferase family 29"/>
    <property type="match status" value="1"/>
</dbReference>
<dbReference type="InterPro" id="IPR001675">
    <property type="entry name" value="Glyco_trans_29"/>
</dbReference>
<dbReference type="InterPro" id="IPR038578">
    <property type="entry name" value="GT29-like_sf"/>
</dbReference>
<dbReference type="PANTHER" id="PTHR45906">
    <property type="entry name" value="ALPHA-N-ACETYL-NEURAMINYL-2,3-BETA-GALACTOSYL-1, 3-N-ACETYL-GALACTOSAMINIDE ALPHA-2,6-SIALYLTRANSFERASE-LIKE"/>
    <property type="match status" value="1"/>
</dbReference>
<dbReference type="PANTHER" id="PTHR45906:SF2">
    <property type="entry name" value="ALPHA-N-ACETYLGALACTOSAMINIDE ALPHA-2,6-SIALYLTRANSFERASE 3"/>
    <property type="match status" value="1"/>
</dbReference>
<dbReference type="Pfam" id="PF00777">
    <property type="entry name" value="Glyco_transf_29"/>
    <property type="match status" value="1"/>
</dbReference>
<comment type="function">
    <text evidence="2 3 5 6">Transfers the sialyl group (N-acetyl-alpha-neuraminyl or NeuAc) from CMP-NeuAc to the GalNAc residue on the NeuAc-alpha-2,3-Gal-beta-1,3-GalNAc sequence of glycoproteins and glycolipids forming an alpha-2,6-linkage. Produces branched type disialyl structures by transfer of a sialyl group onto a GalNAc residue inside the backbone core chains. ST6GalNAcIII prefers glycolipids to glycoproteins, predominantly catalyzing the biosynthesis of ganglioside GD1alpha from GM1b (PubMed:10207017, PubMed:10601645). GD1alpha is a critical molecule in the communication and interaction between neuronal cells and their supportive cells, particularly in brain tissues, and functions as an adhesion molecule in the process of metastasis (By similarity). Sialylation of glycoproteins or glycosphingolipids is very important in tumor development, neuronal development, nerve repair, immunological processes and regulation of hormone sensitivity (By similarity).</text>
</comment>
<comment type="catalytic activity">
    <reaction evidence="5">
        <text>an alpha-Neu5Ac-(2-&gt;3)-beta-D-Gal-(1-&gt;3)-D-GlcNAc derivative + CMP-N-acetyl-beta-neuraminate = an alpha-Neu5Ac-(2-&gt;3)-beta-D-Gal-(1-&gt;3)-[alpha-Neu5Ac-(2-&gt;6)]-D-GlcNAc derivative + CMP + H(+)</text>
        <dbReference type="Rhea" id="RHEA:53896"/>
        <dbReference type="ChEBI" id="CHEBI:15378"/>
        <dbReference type="ChEBI" id="CHEBI:57812"/>
        <dbReference type="ChEBI" id="CHEBI:60377"/>
        <dbReference type="ChEBI" id="CHEBI:146021"/>
        <dbReference type="ChEBI" id="CHEBI:149714"/>
        <dbReference type="EC" id="2.4.3.7"/>
    </reaction>
    <physiologicalReaction direction="left-to-right" evidence="10">
        <dbReference type="Rhea" id="RHEA:53897"/>
    </physiologicalReaction>
</comment>
<comment type="catalytic activity">
    <reaction evidence="5 11">
        <text>a ganglioside GM1b (d18:1(4E)) + CMP-N-acetyl-beta-neuraminate = a ganglioside GD1alpha (d18:1(4E)) + CMP + H(+)</text>
        <dbReference type="Rhea" id="RHEA:41968"/>
        <dbReference type="ChEBI" id="CHEBI:15378"/>
        <dbReference type="ChEBI" id="CHEBI:57812"/>
        <dbReference type="ChEBI" id="CHEBI:60377"/>
        <dbReference type="ChEBI" id="CHEBI:78568"/>
        <dbReference type="ChEBI" id="CHEBI:78569"/>
    </reaction>
    <physiologicalReaction direction="left-to-right" evidence="10 11">
        <dbReference type="Rhea" id="RHEA:41969"/>
    </physiologicalReaction>
</comment>
<comment type="catalytic activity">
    <reaction evidence="2">
        <text>a globoside MSGG + CMP-N-acetyl-beta-neuraminate = a globoside DSGG + CMP + H(+)</text>
        <dbReference type="Rhea" id="RHEA:56088"/>
        <dbReference type="ChEBI" id="CHEBI:15378"/>
        <dbReference type="ChEBI" id="CHEBI:57812"/>
        <dbReference type="ChEBI" id="CHEBI:60377"/>
        <dbReference type="ChEBI" id="CHEBI:140623"/>
        <dbReference type="ChEBI" id="CHEBI:140624"/>
    </reaction>
    <physiologicalReaction direction="left-to-right" evidence="2">
        <dbReference type="Rhea" id="RHEA:56089"/>
    </physiologicalReaction>
</comment>
<comment type="catalytic activity">
    <reaction evidence="5">
        <text>3-O-[alpha-Neu5Ac-(2-&gt;3)-beta-D-Gal-(1-&gt;3)-alpha-D-GalNAc]-L-Ser-[protein] + CMP-N-acetyl-beta-neuraminate = a 3-O-{alpha-Neu5Ac-(2-&gt;3)-beta-D-Gal-(1-&gt;3)-[alpha-Neu5Ac-(2-&gt;6)]-alpha-D-GalNAc}-L-seryl-[protein] + CMP + H(+)</text>
        <dbReference type="Rhea" id="RHEA:65280"/>
        <dbReference type="Rhea" id="RHEA-COMP:16760"/>
        <dbReference type="Rhea" id="RHEA-COMP:16761"/>
        <dbReference type="ChEBI" id="CHEBI:15378"/>
        <dbReference type="ChEBI" id="CHEBI:57812"/>
        <dbReference type="ChEBI" id="CHEBI:60377"/>
        <dbReference type="ChEBI" id="CHEBI:156395"/>
        <dbReference type="ChEBI" id="CHEBI:156397"/>
    </reaction>
    <physiologicalReaction direction="left-to-right" evidence="10">
        <dbReference type="Rhea" id="RHEA:65281"/>
    </physiologicalReaction>
</comment>
<comment type="catalytic activity">
    <reaction evidence="5">
        <text>3-O-[alpha-Neu5Ac-(2-&gt;3)-beta-D-Gal-(1-&gt;3)-alpha-D-GalNAc]-L-Thr-[protein] + CMP-N-acetyl-beta-neuraminate = a 3-O-{alpha-Neu5Ac-(2-&gt;3)-beta-D-Gal-(1-&gt;3)-[alpha-Neu5Ac-(2-&gt;6)]-alpha-D-GalNAc}-L-threonyl-[protein] + CMP + H(+)</text>
        <dbReference type="Rhea" id="RHEA:65284"/>
        <dbReference type="Rhea" id="RHEA-COMP:16762"/>
        <dbReference type="Rhea" id="RHEA-COMP:16763"/>
        <dbReference type="ChEBI" id="CHEBI:15378"/>
        <dbReference type="ChEBI" id="CHEBI:57812"/>
        <dbReference type="ChEBI" id="CHEBI:60377"/>
        <dbReference type="ChEBI" id="CHEBI:156396"/>
        <dbReference type="ChEBI" id="CHEBI:156398"/>
    </reaction>
    <physiologicalReaction direction="left-to-right" evidence="10">
        <dbReference type="Rhea" id="RHEA:65285"/>
    </physiologicalReaction>
</comment>
<comment type="pathway">
    <text evidence="10 11">Protein modification; protein glycosylation.</text>
</comment>
<comment type="pathway">
    <text evidence="10 11">Glycolipid biosynthesis.</text>
</comment>
<comment type="subcellular location">
    <subcellularLocation>
        <location evidence="9">Golgi apparatus membrane</location>
        <topology evidence="9">Single-pass type II membrane protein</topology>
    </subcellularLocation>
</comment>
<comment type="tissue specificity">
    <text evidence="5">In adult tissues, high expression in brain, lung and heart and to a lesser extent in kidney, mammary gland, spleen, testis and thymus.</text>
</comment>
<comment type="developmental stage">
    <text evidence="5">In brain, expression reaches maximum levels at day 12 of the embryonic stage. Keeps almost similar levels during mouse development.</text>
</comment>
<comment type="similarity">
    <text evidence="9">Belongs to the glycosyltransferase 29 family.</text>
</comment>
<comment type="online information" name="Functional Glycomics Gateway - GTase">
    <link uri="http://www.functionalglycomics.org/glycomics/molecule/jsp/glycoEnzyme/viewGlycoEnzyme.jsp?gbpId=gt_mou_652"/>
    <text>ST6GalNAc III</text>
</comment>
<reference key="1">
    <citation type="journal article" date="1999" name="J. Biol. Chem.">
        <title>Molecular cloning and functional expression of two members of mouse NeuAc-alpha-2,3Gal-beta-1,3GalNAc GalNAc-alpha2,6-sialyltransferase family, ST6GalNAc III and IV.</title>
        <authorList>
            <person name="Lee Y.-C."/>
            <person name="Kaufman M."/>
            <person name="Kitazume-Kawaguchi S."/>
            <person name="Kono M."/>
            <person name="Takashima S."/>
            <person name="Kurosawa N."/>
            <person name="Liu H."/>
            <person name="Pircher H."/>
            <person name="Tsuji S."/>
        </authorList>
    </citation>
    <scope>NUCLEOTIDE SEQUENCE [MRNA]</scope>
    <scope>FUNCTION</scope>
    <scope>CATALYTIC ACTIVITY</scope>
    <scope>TISSUE SPECIFICITY</scope>
    <scope>DEVELOPMENTAL STAGE</scope>
    <source>
        <strain>ICR</strain>
        <tissue>Brain</tissue>
    </source>
</reference>
<reference key="2">
    <citation type="journal article" date="2004" name="Genome Res.">
        <title>The status, quality, and expansion of the NIH full-length cDNA project: the Mammalian Gene Collection (MGC).</title>
        <authorList>
            <consortium name="The MGC Project Team"/>
        </authorList>
    </citation>
    <scope>NUCLEOTIDE SEQUENCE [LARGE SCALE MRNA]</scope>
    <source>
        <strain>C57BL/6J</strain>
        <tissue>Brain</tissue>
    </source>
</reference>
<reference key="3">
    <citation type="journal article" date="1999" name="FEBS Lett.">
        <title>A novel glycosyltransferase with a polyglutamine repeat; a new candidate for GD1alpha synthase (ST6GalNAc V).</title>
        <authorList>
            <person name="Ikehara Y."/>
            <person name="Shimizu N."/>
            <person name="Kono M."/>
            <person name="Nishihara S."/>
            <person name="Nakanishi H."/>
            <person name="Kitamura T."/>
            <person name="Narimatsu H."/>
            <person name="Tsuji S."/>
            <person name="Tatematsu M."/>
        </authorList>
    </citation>
    <scope>FUNCTION</scope>
    <scope>CATALYTIC ACTIVITY</scope>
</reference>
<name>SIA7C_MOUSE</name>